<organism>
    <name type="scientific">Homo sapiens</name>
    <name type="common">Human</name>
    <dbReference type="NCBI Taxonomy" id="9606"/>
    <lineage>
        <taxon>Eukaryota</taxon>
        <taxon>Metazoa</taxon>
        <taxon>Chordata</taxon>
        <taxon>Craniata</taxon>
        <taxon>Vertebrata</taxon>
        <taxon>Euteleostomi</taxon>
        <taxon>Mammalia</taxon>
        <taxon>Eutheria</taxon>
        <taxon>Euarchontoglires</taxon>
        <taxon>Primates</taxon>
        <taxon>Haplorrhini</taxon>
        <taxon>Catarrhini</taxon>
        <taxon>Hominidae</taxon>
        <taxon>Homo</taxon>
    </lineage>
</organism>
<name>RGCC_HUMAN</name>
<evidence type="ECO:0000250" key="1"/>
<evidence type="ECO:0000250" key="2">
    <source>
        <dbReference type="UniProtKB" id="Q9DBX1"/>
    </source>
</evidence>
<evidence type="ECO:0000250" key="3">
    <source>
        <dbReference type="UniProtKB" id="Q9Z2P4"/>
    </source>
</evidence>
<evidence type="ECO:0000256" key="4">
    <source>
        <dbReference type="SAM" id="MobiDB-lite"/>
    </source>
</evidence>
<evidence type="ECO:0000269" key="5">
    <source>
    </source>
</evidence>
<evidence type="ECO:0000269" key="6">
    <source>
    </source>
</evidence>
<evidence type="ECO:0000269" key="7">
    <source>
    </source>
</evidence>
<evidence type="ECO:0000269" key="8">
    <source>
    </source>
</evidence>
<evidence type="ECO:0000269" key="9">
    <source>
    </source>
</evidence>
<evidence type="ECO:0000303" key="10">
    <source>
    </source>
</evidence>
<evidence type="ECO:0000305" key="11"/>
<evidence type="ECO:0007744" key="12">
    <source>
    </source>
</evidence>
<evidence type="ECO:0007744" key="13">
    <source>
    </source>
</evidence>
<dbReference type="EMBL" id="AF036549">
    <property type="protein sequence ID" value="AAF04336.1"/>
    <property type="molecule type" value="mRNA"/>
</dbReference>
<dbReference type="EMBL" id="AL354833">
    <property type="status" value="NOT_ANNOTATED_CDS"/>
    <property type="molecule type" value="Genomic_DNA"/>
</dbReference>
<dbReference type="EMBL" id="BC066334">
    <property type="protein sequence ID" value="AAH66334.1"/>
    <property type="molecule type" value="mRNA"/>
</dbReference>
<dbReference type="CCDS" id="CCDS41880.1">
    <molecule id="Q9H4X1-1"/>
</dbReference>
<dbReference type="RefSeq" id="NP_054778.2">
    <molecule id="Q9H4X1-1"/>
    <property type="nucleotide sequence ID" value="NM_014059.3"/>
</dbReference>
<dbReference type="BioGRID" id="118805">
    <property type="interactions" value="18"/>
</dbReference>
<dbReference type="FunCoup" id="Q9H4X1">
    <property type="interactions" value="1512"/>
</dbReference>
<dbReference type="IntAct" id="Q9H4X1">
    <property type="interactions" value="7"/>
</dbReference>
<dbReference type="STRING" id="9606.ENSP00000368664"/>
<dbReference type="GlyGen" id="Q9H4X1">
    <property type="glycosylation" value="1 site"/>
</dbReference>
<dbReference type="iPTMnet" id="Q9H4X1"/>
<dbReference type="PhosphoSitePlus" id="Q9H4X1"/>
<dbReference type="BioMuta" id="RGCC"/>
<dbReference type="DMDM" id="74752653"/>
<dbReference type="jPOST" id="Q9H4X1"/>
<dbReference type="MassIVE" id="Q9H4X1"/>
<dbReference type="PaxDb" id="9606-ENSP00000368664"/>
<dbReference type="PeptideAtlas" id="Q9H4X1"/>
<dbReference type="ProteomicsDB" id="80878">
    <molecule id="Q9H4X1-1"/>
</dbReference>
<dbReference type="ProteomicsDB" id="80879">
    <molecule id="Q9H4X1-2"/>
</dbReference>
<dbReference type="Pumba" id="Q9H4X1"/>
<dbReference type="Antibodypedia" id="23431">
    <property type="antibodies" value="82 antibodies from 17 providers"/>
</dbReference>
<dbReference type="DNASU" id="28984"/>
<dbReference type="Ensembl" id="ENST00000379359.4">
    <molecule id="Q9H4X1-1"/>
    <property type="protein sequence ID" value="ENSP00000368664.3"/>
    <property type="gene ID" value="ENSG00000102760.13"/>
</dbReference>
<dbReference type="GeneID" id="28984"/>
<dbReference type="KEGG" id="hsa:28984"/>
<dbReference type="MANE-Select" id="ENST00000379359.4">
    <property type="protein sequence ID" value="ENSP00000368664.3"/>
    <property type="RefSeq nucleotide sequence ID" value="NM_014059.3"/>
    <property type="RefSeq protein sequence ID" value="NP_054778.2"/>
</dbReference>
<dbReference type="UCSC" id="uc001uyi.3">
    <molecule id="Q9H4X1-1"/>
    <property type="organism name" value="human"/>
</dbReference>
<dbReference type="AGR" id="HGNC:20369"/>
<dbReference type="CTD" id="28984"/>
<dbReference type="DisGeNET" id="28984"/>
<dbReference type="GeneCards" id="RGCC"/>
<dbReference type="HGNC" id="HGNC:20369">
    <property type="gene designation" value="RGCC"/>
</dbReference>
<dbReference type="HPA" id="ENSG00000102760">
    <property type="expression patterns" value="Tissue enhanced (bone marrow, lung)"/>
</dbReference>
<dbReference type="MIM" id="610077">
    <property type="type" value="gene"/>
</dbReference>
<dbReference type="neXtProt" id="NX_Q9H4X1"/>
<dbReference type="OpenTargets" id="ENSG00000102760"/>
<dbReference type="PharmGKB" id="PA134895181"/>
<dbReference type="VEuPathDB" id="HostDB:ENSG00000102760"/>
<dbReference type="eggNOG" id="ENOG502S1UB">
    <property type="taxonomic scope" value="Eukaryota"/>
</dbReference>
<dbReference type="GeneTree" id="ENSGT00390000011709"/>
<dbReference type="HOGENOM" id="CLU_154700_0_0_1"/>
<dbReference type="InParanoid" id="Q9H4X1"/>
<dbReference type="OMA" id="KERHFQY"/>
<dbReference type="OrthoDB" id="9887289at2759"/>
<dbReference type="PAN-GO" id="Q9H4X1">
    <property type="GO annotations" value="3 GO annotations based on evolutionary models"/>
</dbReference>
<dbReference type="PhylomeDB" id="Q9H4X1"/>
<dbReference type="TreeFam" id="TF336312"/>
<dbReference type="PathwayCommons" id="Q9H4X1"/>
<dbReference type="Reactome" id="R-HSA-6804115">
    <property type="pathway name" value="TP53 regulates transcription of additional cell cycle genes whose exact role in the p53 pathway remain uncertain"/>
</dbReference>
<dbReference type="SignaLink" id="Q9H4X1"/>
<dbReference type="SIGNOR" id="Q9H4X1"/>
<dbReference type="BioGRID-ORCS" id="28984">
    <property type="hits" value="10 hits in 1154 CRISPR screens"/>
</dbReference>
<dbReference type="CD-CODE" id="8C2F96ED">
    <property type="entry name" value="Centrosome"/>
</dbReference>
<dbReference type="GeneWiki" id="C13orf15"/>
<dbReference type="GenomeRNAi" id="28984"/>
<dbReference type="Pharos" id="Q9H4X1">
    <property type="development level" value="Tbio"/>
</dbReference>
<dbReference type="PRO" id="PR:Q9H4X1"/>
<dbReference type="Proteomes" id="UP000005640">
    <property type="component" value="Chromosome 13"/>
</dbReference>
<dbReference type="RNAct" id="Q9H4X1">
    <property type="molecule type" value="protein"/>
</dbReference>
<dbReference type="Bgee" id="ENSG00000102760">
    <property type="expression patterns" value="Expressed in decidua and 195 other cell types or tissues"/>
</dbReference>
<dbReference type="GO" id="GO:0005813">
    <property type="term" value="C:centrosome"/>
    <property type="evidence" value="ECO:0000314"/>
    <property type="project" value="BHF-UCL"/>
</dbReference>
<dbReference type="GO" id="GO:0005737">
    <property type="term" value="C:cytoplasm"/>
    <property type="evidence" value="ECO:0000314"/>
    <property type="project" value="BHF-UCL"/>
</dbReference>
<dbReference type="GO" id="GO:0005829">
    <property type="term" value="C:cytosol"/>
    <property type="evidence" value="ECO:0000304"/>
    <property type="project" value="Reactome"/>
</dbReference>
<dbReference type="GO" id="GO:0005730">
    <property type="term" value="C:nucleolus"/>
    <property type="evidence" value="ECO:0000314"/>
    <property type="project" value="HPA"/>
</dbReference>
<dbReference type="GO" id="GO:0005654">
    <property type="term" value="C:nucleoplasm"/>
    <property type="evidence" value="ECO:0000314"/>
    <property type="project" value="HPA"/>
</dbReference>
<dbReference type="GO" id="GO:0005634">
    <property type="term" value="C:nucleus"/>
    <property type="evidence" value="ECO:0000314"/>
    <property type="project" value="BHF-UCL"/>
</dbReference>
<dbReference type="GO" id="GO:0030295">
    <property type="term" value="F:protein kinase activator activity"/>
    <property type="evidence" value="ECO:0000314"/>
    <property type="project" value="BHF-UCL"/>
</dbReference>
<dbReference type="GO" id="GO:0019901">
    <property type="term" value="F:protein kinase binding"/>
    <property type="evidence" value="ECO:0000353"/>
    <property type="project" value="BHF-UCL"/>
</dbReference>
<dbReference type="GO" id="GO:0019887">
    <property type="term" value="F:protein kinase regulator activity"/>
    <property type="evidence" value="ECO:0000315"/>
    <property type="project" value="ARUK-UCL"/>
</dbReference>
<dbReference type="GO" id="GO:0070412">
    <property type="term" value="F:R-SMAD binding"/>
    <property type="evidence" value="ECO:0000353"/>
    <property type="project" value="BHF-UCL"/>
</dbReference>
<dbReference type="GO" id="GO:0071456">
    <property type="term" value="P:cellular response to hypoxia"/>
    <property type="evidence" value="ECO:0000315"/>
    <property type="project" value="BHF-UCL"/>
</dbReference>
<dbReference type="GO" id="GO:0002430">
    <property type="term" value="P:complement receptor mediated signaling pathway"/>
    <property type="evidence" value="ECO:0000315"/>
    <property type="project" value="BHF-UCL"/>
</dbReference>
<dbReference type="GO" id="GO:0072537">
    <property type="term" value="P:fibroblast activation"/>
    <property type="evidence" value="ECO:0000250"/>
    <property type="project" value="UniProtKB"/>
</dbReference>
<dbReference type="GO" id="GO:0016525">
    <property type="term" value="P:negative regulation of angiogenesis"/>
    <property type="evidence" value="ECO:0000314"/>
    <property type="project" value="BHF-UCL"/>
</dbReference>
<dbReference type="GO" id="GO:0043537">
    <property type="term" value="P:negative regulation of blood vessel endothelial cell migration"/>
    <property type="evidence" value="ECO:0000314"/>
    <property type="project" value="BHF-UCL"/>
</dbReference>
<dbReference type="GO" id="GO:0008285">
    <property type="term" value="P:negative regulation of cell population proliferation"/>
    <property type="evidence" value="ECO:0000315"/>
    <property type="project" value="BHF-UCL"/>
</dbReference>
<dbReference type="GO" id="GO:2000048">
    <property type="term" value="P:negative regulation of cell-cell adhesion mediated by cadherin"/>
    <property type="evidence" value="ECO:0000314"/>
    <property type="project" value="BHF-UCL"/>
</dbReference>
<dbReference type="GO" id="GO:0001818">
    <property type="term" value="P:negative regulation of cytokine production"/>
    <property type="evidence" value="ECO:0000315"/>
    <property type="project" value="BHF-UCL"/>
</dbReference>
<dbReference type="GO" id="GO:0001937">
    <property type="term" value="P:negative regulation of endothelial cell proliferation"/>
    <property type="evidence" value="ECO:0000314"/>
    <property type="project" value="BHF-UCL"/>
</dbReference>
<dbReference type="GO" id="GO:0001100">
    <property type="term" value="P:negative regulation of exit from mitosis"/>
    <property type="evidence" value="ECO:0000314"/>
    <property type="project" value="BHF-UCL"/>
</dbReference>
<dbReference type="GO" id="GO:0090272">
    <property type="term" value="P:negative regulation of fibroblast growth factor production"/>
    <property type="evidence" value="ECO:0000314"/>
    <property type="project" value="BHF-UCL"/>
</dbReference>
<dbReference type="GO" id="GO:1901991">
    <property type="term" value="P:negative regulation of mitotic cell cycle phase transition"/>
    <property type="evidence" value="ECO:0000314"/>
    <property type="project" value="BHF-UCL"/>
</dbReference>
<dbReference type="GO" id="GO:0043491">
    <property type="term" value="P:phosphatidylinositol 3-kinase/protein kinase B signal transduction"/>
    <property type="evidence" value="ECO:0000314"/>
    <property type="project" value="BHF-UCL"/>
</dbReference>
<dbReference type="GO" id="GO:0032967">
    <property type="term" value="P:positive regulation of collagen biosynthetic process"/>
    <property type="evidence" value="ECO:0000314"/>
    <property type="project" value="BHF-UCL"/>
</dbReference>
<dbReference type="GO" id="GO:0001819">
    <property type="term" value="P:positive regulation of cytokine production"/>
    <property type="evidence" value="ECO:0000315"/>
    <property type="project" value="BHF-UCL"/>
</dbReference>
<dbReference type="GO" id="GO:2000573">
    <property type="term" value="P:positive regulation of DNA biosynthetic process"/>
    <property type="evidence" value="ECO:0000250"/>
    <property type="project" value="BHF-UCL"/>
</dbReference>
<dbReference type="GO" id="GO:2000353">
    <property type="term" value="P:positive regulation of endothelial cell apoptotic process"/>
    <property type="evidence" value="ECO:0000314"/>
    <property type="project" value="BHF-UCL"/>
</dbReference>
<dbReference type="GO" id="GO:0010718">
    <property type="term" value="P:positive regulation of epithelial to mesenchymal transition"/>
    <property type="evidence" value="ECO:0000314"/>
    <property type="project" value="BHF-UCL"/>
</dbReference>
<dbReference type="GO" id="GO:1901203">
    <property type="term" value="P:positive regulation of extracellular matrix assembly"/>
    <property type="evidence" value="ECO:0000314"/>
    <property type="project" value="BHF-UCL"/>
</dbReference>
<dbReference type="GO" id="GO:0003331">
    <property type="term" value="P:positive regulation of extracellular matrix constituent secretion"/>
    <property type="evidence" value="ECO:0000314"/>
    <property type="project" value="BHF-UCL"/>
</dbReference>
<dbReference type="GO" id="GO:1900087">
    <property type="term" value="P:positive regulation of G1/S transition of mitotic cell cycle"/>
    <property type="evidence" value="ECO:0000314"/>
    <property type="project" value="BHF-UCL"/>
</dbReference>
<dbReference type="GO" id="GO:0010628">
    <property type="term" value="P:positive regulation of gene expression"/>
    <property type="evidence" value="ECO:0000314"/>
    <property type="project" value="BHF-UCL"/>
</dbReference>
<dbReference type="GO" id="GO:0051496">
    <property type="term" value="P:positive regulation of stress fiber assembly"/>
    <property type="evidence" value="ECO:0000314"/>
    <property type="project" value="BHF-UCL"/>
</dbReference>
<dbReference type="GO" id="GO:0045944">
    <property type="term" value="P:positive regulation of transcription by RNA polymerase II"/>
    <property type="evidence" value="ECO:0000315"/>
    <property type="project" value="BHF-UCL"/>
</dbReference>
<dbReference type="GO" id="GO:1904707">
    <property type="term" value="P:positive regulation of vascular associated smooth muscle cell proliferation"/>
    <property type="evidence" value="ECO:0000314"/>
    <property type="project" value="BHF-UCL"/>
</dbReference>
<dbReference type="GO" id="GO:0007179">
    <property type="term" value="P:transforming growth factor beta receptor signaling pathway"/>
    <property type="evidence" value="ECO:0000315"/>
    <property type="project" value="BHF-UCL"/>
</dbReference>
<dbReference type="InterPro" id="IPR029252">
    <property type="entry name" value="RGCC"/>
</dbReference>
<dbReference type="PANTHER" id="PTHR32193">
    <property type="entry name" value="REGULATOR OF CELL CYCLE RGCC"/>
    <property type="match status" value="1"/>
</dbReference>
<dbReference type="PANTHER" id="PTHR32193:SF3">
    <property type="entry name" value="REGULATOR OF CELL CYCLE RGCC"/>
    <property type="match status" value="1"/>
</dbReference>
<dbReference type="Pfam" id="PF15151">
    <property type="entry name" value="RGCC"/>
    <property type="match status" value="1"/>
</dbReference>
<comment type="function">
    <text evidence="5 7 8 9">Modulates the activity of cell cycle-specific kinases. Enhances CDK1 activity. May contribute to the regulation of the cell cycle. May inhibit growth of glioma cells by promoting arrest of mitotic progression at the G2/M transition. Fibrogenic factor contributing to the pathogenesis of renal fibrosis through fibroblast activation.</text>
</comment>
<comment type="subunit">
    <text evidence="1 7">Interacts with SMAD3 (By similarity). Interacts with CDK1 and PLK1.</text>
</comment>
<comment type="subcellular location">
    <subcellularLocation>
        <location>Cytoplasm</location>
    </subcellularLocation>
    <subcellularLocation>
        <location>Nucleus</location>
    </subcellularLocation>
    <subcellularLocation>
        <location>Cytoplasm</location>
        <location>Cytoskeleton</location>
        <location>Microtubule organizing center</location>
        <location>Centrosome</location>
    </subcellularLocation>
    <text>Cytoplasmic in unstimulated cells. Nuclear after activation by complement. Associated with the centrosome during prometaphase and metaphase.</text>
</comment>
<comment type="alternative products">
    <event type="alternative splicing"/>
    <isoform>
        <id>Q9H4X1-1</id>
        <name>1</name>
        <sequence type="displayed"/>
    </isoform>
    <isoform>
        <id>Q9H4X1-2</id>
        <name>2</name>
        <sequence type="described" ref="VSP_022873"/>
    </isoform>
</comment>
<comment type="tissue specificity">
    <text evidence="5 6">Detected in brain, heart and liver (at protein level). Highly expressed in liver, skeletal muscle, kidney and pancreas. Detected at lower levels in heart, brain and placenta. Detected in aorta endothelial cells. Overexpressed in colon, breast, prostate, bladder, lung, and ovarian cancer tissues.</text>
</comment>
<comment type="induction">
    <text evidence="5 9">By Epstein-Barr virus (EBV). Up-regulated in aorta endothelial cells in response to complement activation.</text>
</comment>
<proteinExistence type="evidence at protein level"/>
<keyword id="KW-0025">Alternative splicing</keyword>
<keyword id="KW-0131">Cell cycle</keyword>
<keyword id="KW-0963">Cytoplasm</keyword>
<keyword id="KW-0206">Cytoskeleton</keyword>
<keyword id="KW-0539">Nucleus</keyword>
<keyword id="KW-0597">Phosphoprotein</keyword>
<keyword id="KW-1267">Proteomics identification</keyword>
<keyword id="KW-1185">Reference proteome</keyword>
<sequence>MKPPAAQGSPAAAAAAAPALDSAAAEDLSDALCEFDAVLADFASPFHERHFHYEEHLERMKRRSSASVSDSSGFSDSESADSLYRNSFSFSDEKLNSPTDSTPALLSATVTPQKAKLGDTKELEAFIADLDKTLASM</sequence>
<feature type="chain" id="PRO_0000274701" description="Regulator of cell cycle RGCC">
    <location>
        <begin position="1"/>
        <end position="137"/>
    </location>
</feature>
<feature type="region of interest" description="Disordered" evidence="4">
    <location>
        <begin position="1"/>
        <end position="20"/>
    </location>
</feature>
<feature type="region of interest" description="Disordered" evidence="4">
    <location>
        <begin position="57"/>
        <end position="80"/>
    </location>
</feature>
<feature type="compositionally biased region" description="Low complexity" evidence="4">
    <location>
        <begin position="65"/>
        <end position="80"/>
    </location>
</feature>
<feature type="modified residue" description="Phosphoserine" evidence="2">
    <location>
        <position position="67"/>
    </location>
</feature>
<feature type="modified residue" description="Phosphoserine" evidence="12">
    <location>
        <position position="69"/>
    </location>
</feature>
<feature type="modified residue" description="Phosphoserine" evidence="12">
    <location>
        <position position="71"/>
    </location>
</feature>
<feature type="modified residue" description="Phosphoserine" evidence="12">
    <location>
        <position position="75"/>
    </location>
</feature>
<feature type="modified residue" description="Phosphoserine" evidence="3">
    <location>
        <position position="91"/>
    </location>
</feature>
<feature type="modified residue" description="Phosphoserine" evidence="12 13">
    <location>
        <position position="97"/>
    </location>
</feature>
<feature type="modified residue" description="Phosphothreonine; by CDK1" evidence="5 12">
    <location>
        <position position="111"/>
    </location>
</feature>
<feature type="splice variant" id="VSP_022873" description="In isoform 2." evidence="10">
    <location>
        <begin position="6"/>
        <end position="25"/>
    </location>
</feature>
<feature type="mutagenesis site" description="Loss of phosphorylation. Reduced stimulation of CDK1 activity." evidence="5">
    <original>T</original>
    <variation>A</variation>
    <location>
        <position position="111"/>
    </location>
</feature>
<feature type="sequence conflict" description="In Ref. 3; AAH66334." evidence="11" ref="3">
    <original>P</original>
    <variation>Q</variation>
    <location>
        <position position="3"/>
    </location>
</feature>
<reference key="1">
    <citation type="journal article" date="2002" name="J. Biol. Chem.">
        <title>RGC-32 increases p34CDC2 kinase activity and entry of aortic smooth muscle cells into S-phase.</title>
        <authorList>
            <person name="Badea T."/>
            <person name="Niculescu F."/>
            <person name="Soane L."/>
            <person name="Fosbrink M."/>
            <person name="Sorana H."/>
            <person name="Rus V."/>
            <person name="Shin M.L."/>
            <person name="Rus H."/>
        </authorList>
    </citation>
    <scope>NUCLEOTIDE SEQUENCE [MRNA] (ISOFORM 2)</scope>
    <scope>FUNCTION</scope>
    <scope>INDUCTION</scope>
    <scope>SUBCELLULAR LOCATION</scope>
    <scope>MUTAGENESIS OF THR-111</scope>
    <scope>PHOSPHORYLATION AT THR-111</scope>
    <scope>TISSUE SPECIFICITY</scope>
    <source>
        <tissue>Fetal brain</tissue>
    </source>
</reference>
<reference key="2">
    <citation type="journal article" date="2004" name="Nature">
        <title>The DNA sequence and analysis of human chromosome 13.</title>
        <authorList>
            <person name="Dunham A."/>
            <person name="Matthews L.H."/>
            <person name="Burton J."/>
            <person name="Ashurst J.L."/>
            <person name="Howe K.L."/>
            <person name="Ashcroft K.J."/>
            <person name="Beare D.M."/>
            <person name="Burford D.C."/>
            <person name="Hunt S.E."/>
            <person name="Griffiths-Jones S."/>
            <person name="Jones M.C."/>
            <person name="Keenan S.J."/>
            <person name="Oliver K."/>
            <person name="Scott C.E."/>
            <person name="Ainscough R."/>
            <person name="Almeida J.P."/>
            <person name="Ambrose K.D."/>
            <person name="Andrews D.T."/>
            <person name="Ashwell R.I.S."/>
            <person name="Babbage A.K."/>
            <person name="Bagguley C.L."/>
            <person name="Bailey J."/>
            <person name="Bannerjee R."/>
            <person name="Barlow K.F."/>
            <person name="Bates K."/>
            <person name="Beasley H."/>
            <person name="Bird C.P."/>
            <person name="Bray-Allen S."/>
            <person name="Brown A.J."/>
            <person name="Brown J.Y."/>
            <person name="Burrill W."/>
            <person name="Carder C."/>
            <person name="Carter N.P."/>
            <person name="Chapman J.C."/>
            <person name="Clamp M.E."/>
            <person name="Clark S.Y."/>
            <person name="Clarke G."/>
            <person name="Clee C.M."/>
            <person name="Clegg S.C."/>
            <person name="Cobley V."/>
            <person name="Collins J.E."/>
            <person name="Corby N."/>
            <person name="Coville G.J."/>
            <person name="Deloukas P."/>
            <person name="Dhami P."/>
            <person name="Dunham I."/>
            <person name="Dunn M."/>
            <person name="Earthrowl M.E."/>
            <person name="Ellington A.G."/>
            <person name="Faulkner L."/>
            <person name="Frankish A.G."/>
            <person name="Frankland J."/>
            <person name="French L."/>
            <person name="Garner P."/>
            <person name="Garnett J."/>
            <person name="Gilbert J.G.R."/>
            <person name="Gilson C.J."/>
            <person name="Ghori J."/>
            <person name="Grafham D.V."/>
            <person name="Gribble S.M."/>
            <person name="Griffiths C."/>
            <person name="Hall R.E."/>
            <person name="Hammond S."/>
            <person name="Harley J.L."/>
            <person name="Hart E.A."/>
            <person name="Heath P.D."/>
            <person name="Howden P.J."/>
            <person name="Huckle E.J."/>
            <person name="Hunt P.J."/>
            <person name="Hunt A.R."/>
            <person name="Johnson C."/>
            <person name="Johnson D."/>
            <person name="Kay M."/>
            <person name="Kimberley A.M."/>
            <person name="King A."/>
            <person name="Laird G.K."/>
            <person name="Langford C.J."/>
            <person name="Lawlor S."/>
            <person name="Leongamornlert D.A."/>
            <person name="Lloyd D.M."/>
            <person name="Lloyd C."/>
            <person name="Loveland J.E."/>
            <person name="Lovell J."/>
            <person name="Martin S."/>
            <person name="Mashreghi-Mohammadi M."/>
            <person name="McLaren S.J."/>
            <person name="McMurray A."/>
            <person name="Milne S."/>
            <person name="Moore M.J.F."/>
            <person name="Nickerson T."/>
            <person name="Palmer S.A."/>
            <person name="Pearce A.V."/>
            <person name="Peck A.I."/>
            <person name="Pelan S."/>
            <person name="Phillimore B."/>
            <person name="Porter K.M."/>
            <person name="Rice C.M."/>
            <person name="Searle S."/>
            <person name="Sehra H.K."/>
            <person name="Shownkeen R."/>
            <person name="Skuce C.D."/>
            <person name="Smith M."/>
            <person name="Steward C.A."/>
            <person name="Sycamore N."/>
            <person name="Tester J."/>
            <person name="Thomas D.W."/>
            <person name="Tracey A."/>
            <person name="Tromans A."/>
            <person name="Tubby B."/>
            <person name="Wall M."/>
            <person name="Wallis J.M."/>
            <person name="West A.P."/>
            <person name="Whitehead S.L."/>
            <person name="Willey D.L."/>
            <person name="Wilming L."/>
            <person name="Wray P.W."/>
            <person name="Wright M.W."/>
            <person name="Young L."/>
            <person name="Coulson A."/>
            <person name="Durbin R.M."/>
            <person name="Hubbard T."/>
            <person name="Sulston J.E."/>
            <person name="Beck S."/>
            <person name="Bentley D.R."/>
            <person name="Rogers J."/>
            <person name="Ross M.T."/>
        </authorList>
    </citation>
    <scope>NUCLEOTIDE SEQUENCE [LARGE SCALE GENOMIC DNA]</scope>
</reference>
<reference key="3">
    <citation type="journal article" date="2004" name="Genome Res.">
        <title>The status, quality, and expansion of the NIH full-length cDNA project: the Mammalian Gene Collection (MGC).</title>
        <authorList>
            <consortium name="The MGC Project Team"/>
        </authorList>
    </citation>
    <scope>NUCLEOTIDE SEQUENCE [LARGE SCALE MRNA] (ISOFORM 1)</scope>
    <source>
        <tissue>Brain</tissue>
    </source>
</reference>
<reference key="4">
    <citation type="journal article" date="2005" name="Exp. Mol. Pathol.">
        <title>Overexpression of RGC-32 in colon cancer and other tumors.</title>
        <authorList>
            <person name="Fosbrink M."/>
            <person name="Cudrici C."/>
            <person name="Niculescu F."/>
            <person name="Badea T.C."/>
            <person name="David S."/>
            <person name="Shamsuddin A."/>
            <person name="Shin M.L."/>
            <person name="Rus H."/>
        </authorList>
    </citation>
    <scope>TISSUE SPECIFICITY</scope>
</reference>
<reference key="5">
    <citation type="journal article" date="2007" name="Oncogene">
        <title>RGC32, a novel p53-inducible gene, is located on centrosomes during mitosis and results in G2/M arrest.</title>
        <authorList>
            <person name="Saigusa K."/>
            <person name="Imoto I."/>
            <person name="Tanikawa C."/>
            <person name="Aoyagi M."/>
            <person name="Ohno K."/>
            <person name="Nakamura Y."/>
            <person name="Inazawa J."/>
        </authorList>
    </citation>
    <scope>INTERACTION WITH PLK1</scope>
    <scope>FUNCTION</scope>
    <scope>SUBCELLULAR LOCATION</scope>
</reference>
<reference key="6">
    <citation type="journal article" date="2009" name="J. Biol. Chem.">
        <title>RGC-32 mediates transforming growth factor-beta-induced epithelial-mesenchymal transition in human renal proximal tubular cells.</title>
        <authorList>
            <person name="Huang W.Y."/>
            <person name="Li Z.G."/>
            <person name="Rus H."/>
            <person name="Wang X."/>
            <person name="Jose P.A."/>
            <person name="Chen S.Y."/>
        </authorList>
    </citation>
    <scope>FUNCTION</scope>
</reference>
<reference key="7">
    <citation type="journal article" date="2009" name="Sci. Signal.">
        <title>Quantitative phosphoproteomic analysis of T cell receptor signaling reveals system-wide modulation of protein-protein interactions.</title>
        <authorList>
            <person name="Mayya V."/>
            <person name="Lundgren D.H."/>
            <person name="Hwang S.-I."/>
            <person name="Rezaul K."/>
            <person name="Wu L."/>
            <person name="Eng J.K."/>
            <person name="Rodionov V."/>
            <person name="Han D.K."/>
        </authorList>
    </citation>
    <scope>PHOSPHORYLATION [LARGE SCALE ANALYSIS] AT SER-69; SER-71; SER-75; SER-97 AND THR-111</scope>
    <scope>IDENTIFICATION BY MASS SPECTROMETRY [LARGE SCALE ANALYSIS]</scope>
    <source>
        <tissue>Leukemic T-cell</tissue>
    </source>
</reference>
<reference key="8">
    <citation type="journal article" date="2011" name="PLoS ONE">
        <title>Upregulation of the cell-cycle regulator RGC-32 in Epstein-Barr virus-immortalized cells.</title>
        <authorList>
            <person name="Schlick S.N."/>
            <person name="Wood C.D."/>
            <person name="Gunnell A."/>
            <person name="Webb H.M."/>
            <person name="Khasnis S."/>
            <person name="Schepers A."/>
            <person name="West M.J."/>
        </authorList>
    </citation>
    <scope>FUNCTION</scope>
    <scope>INDUCTION</scope>
</reference>
<reference key="9">
    <citation type="journal article" date="2013" name="J. Proteome Res.">
        <title>Toward a comprehensive characterization of a human cancer cell phosphoproteome.</title>
        <authorList>
            <person name="Zhou H."/>
            <person name="Di Palma S."/>
            <person name="Preisinger C."/>
            <person name="Peng M."/>
            <person name="Polat A.N."/>
            <person name="Heck A.J."/>
            <person name="Mohammed S."/>
        </authorList>
    </citation>
    <scope>PHOSPHORYLATION [LARGE SCALE ANALYSIS] AT SER-97</scope>
    <scope>IDENTIFICATION BY MASS SPECTROMETRY [LARGE SCALE ANALYSIS]</scope>
    <source>
        <tissue>Erythroleukemia</tissue>
    </source>
</reference>
<protein>
    <recommendedName>
        <fullName>Regulator of cell cycle RGCC</fullName>
    </recommendedName>
    <alternativeName>
        <fullName>Response gene to complement 32 protein</fullName>
        <shortName>RGC-32</shortName>
    </alternativeName>
</protein>
<accession>Q9H4X1</accession>
<accession>Q6NZ48</accession>
<accession>Q9UL69</accession>
<gene>
    <name type="primary">RGCC</name>
    <name type="synonym">C13orf15</name>
    <name type="synonym">RGC32</name>
</gene>